<protein>
    <recommendedName>
        <fullName>Pre-rRNA-processing protein pro-1</fullName>
    </recommendedName>
    <alternativeName>
        <fullName>Proximal proliferation in germline protein 1</fullName>
    </alternativeName>
</protein>
<accession>A8WSU9</accession>
<organism>
    <name type="scientific">Caenorhabditis briggsae</name>
    <dbReference type="NCBI Taxonomy" id="6238"/>
    <lineage>
        <taxon>Eukaryota</taxon>
        <taxon>Metazoa</taxon>
        <taxon>Ecdysozoa</taxon>
        <taxon>Nematoda</taxon>
        <taxon>Chromadorea</taxon>
        <taxon>Rhabditida</taxon>
        <taxon>Rhabditina</taxon>
        <taxon>Rhabditomorpha</taxon>
        <taxon>Rhabditoidea</taxon>
        <taxon>Rhabditidae</taxon>
        <taxon>Peloderinae</taxon>
        <taxon>Caenorhabditis</taxon>
    </lineage>
</organism>
<comment type="function">
    <text evidence="1 3">Component of the PELP1 complex involved in the nucleolar steps of 28S rRNA maturation and the subsequent nucleoplasmic transit of the pre-60S ribosomal subunit (By similarity). Required for processing ITS2 sequences from rRNA intermediates during 26S rRNA maturation (By similarity). Required in the soma to promote normal proliferation and prevent germline tumor formation (By similarity).</text>
</comment>
<comment type="subunit">
    <text evidence="3">Component of the PELP1 complex, composed of at least PELP1, TEX10 and WDR18. The complex interacts with pre-60S ribosome particles.</text>
</comment>
<comment type="subcellular location">
    <subcellularLocation>
        <location evidence="3">Nucleus</location>
        <location evidence="3">Nucleolus</location>
    </subcellularLocation>
    <subcellularLocation>
        <location evidence="2">Nucleus</location>
        <location evidence="2">Nucleoplasm</location>
    </subcellularLocation>
</comment>
<comment type="similarity">
    <text evidence="6">Belongs to the WD repeat IPI3/WDR18 family.</text>
</comment>
<sequence>MAYLGVDTSRIAGTQPLEMLLISSSSPDPHSTIIIDPRTGVSSWSYKGGELQGASTGLVEPLGKDGEHIVVTTKDRPLVHVIAVHSKDRFHQKCVLPGPVSAICSDRSGRFAFMSIKRQLYCWLLSTGELLSVIDAHYQNITKLALSDDDSMVFTASKDGAIHGYLVTELVSADRDSTVAPFRKWASHTLAVSDLKITHGSNPRILTTGADHIACLHSISMDSVILKASADRPLTSCAIDSAETRIFIGTEVGNIAQINLFQLGAEERDLLIQAGDEHNTKFRVLNGHSDEITRLTINTDGTLLASGDASGKYCIWEISSHQCLKVSTMRSTISTLRFIPFWPTISGGEHTKKFRPVWDLRREPTKCERLAIEVSNEFNADQKHWNDVIEDSIDQMLLESGSTTSAQLQWQVEAPMRKQAEVEKAEAEAMAQVITLGDDEDDAPEVGNQRRQNKKNNKKNRKLQKKLEAEQALKNKVIEEEAELIVIDDGEESNKKILDLQASMTELREENEKLKEINRQMYEFVAAEIVDR</sequence>
<name>PRO1_CAEBR</name>
<gene>
    <name type="primary">pro-1</name>
    <name type="ORF">CBG03075</name>
</gene>
<evidence type="ECO:0000250" key="1">
    <source>
        <dbReference type="UniProtKB" id="Q22006"/>
    </source>
</evidence>
<evidence type="ECO:0000250" key="2">
    <source>
        <dbReference type="UniProtKB" id="Q4VBE8"/>
    </source>
</evidence>
<evidence type="ECO:0000250" key="3">
    <source>
        <dbReference type="UniProtKB" id="Q9BV38"/>
    </source>
</evidence>
<evidence type="ECO:0000255" key="4"/>
<evidence type="ECO:0000256" key="5">
    <source>
        <dbReference type="SAM" id="MobiDB-lite"/>
    </source>
</evidence>
<evidence type="ECO:0000305" key="6"/>
<proteinExistence type="inferred from homology"/>
<reference key="1">
    <citation type="journal article" date="2003" name="PLoS Biol.">
        <title>The genome sequence of Caenorhabditis briggsae: a platform for comparative genomics.</title>
        <authorList>
            <person name="Stein L.D."/>
            <person name="Bao Z."/>
            <person name="Blasiar D."/>
            <person name="Blumenthal T."/>
            <person name="Brent M.R."/>
            <person name="Chen N."/>
            <person name="Chinwalla A."/>
            <person name="Clarke L."/>
            <person name="Clee C."/>
            <person name="Coghlan A."/>
            <person name="Coulson A."/>
            <person name="D'Eustachio P."/>
            <person name="Fitch D.H.A."/>
            <person name="Fulton L.A."/>
            <person name="Fulton R.E."/>
            <person name="Griffiths-Jones S."/>
            <person name="Harris T.W."/>
            <person name="Hillier L.W."/>
            <person name="Kamath R."/>
            <person name="Kuwabara P.E."/>
            <person name="Mardis E.R."/>
            <person name="Marra M.A."/>
            <person name="Miner T.L."/>
            <person name="Minx P."/>
            <person name="Mullikin J.C."/>
            <person name="Plumb R.W."/>
            <person name="Rogers J."/>
            <person name="Schein J.E."/>
            <person name="Sohrmann M."/>
            <person name="Spieth J."/>
            <person name="Stajich J.E."/>
            <person name="Wei C."/>
            <person name="Willey D."/>
            <person name="Wilson R.K."/>
            <person name="Durbin R.M."/>
            <person name="Waterston R.H."/>
        </authorList>
    </citation>
    <scope>NUCLEOTIDE SEQUENCE [LARGE SCALE GENOMIC DNA]</scope>
    <source>
        <strain>AF16</strain>
    </source>
</reference>
<feature type="chain" id="PRO_0000315876" description="Pre-rRNA-processing protein pro-1">
    <location>
        <begin position="1"/>
        <end position="532"/>
    </location>
</feature>
<feature type="repeat" description="WD 1">
    <location>
        <begin position="136"/>
        <end position="175"/>
    </location>
</feature>
<feature type="repeat" description="WD 2">
    <location>
        <begin position="287"/>
        <end position="326"/>
    </location>
</feature>
<feature type="region of interest" description="Disordered" evidence="5">
    <location>
        <begin position="435"/>
        <end position="464"/>
    </location>
</feature>
<feature type="coiled-coil region" evidence="4">
    <location>
        <begin position="445"/>
        <end position="526"/>
    </location>
</feature>
<feature type="compositionally biased region" description="Basic residues" evidence="5">
    <location>
        <begin position="451"/>
        <end position="464"/>
    </location>
</feature>
<keyword id="KW-0175">Coiled coil</keyword>
<keyword id="KW-0217">Developmental protein</keyword>
<keyword id="KW-0221">Differentiation</keyword>
<keyword id="KW-0334">Gonadal differentiation</keyword>
<keyword id="KW-0539">Nucleus</keyword>
<keyword id="KW-1185">Reference proteome</keyword>
<keyword id="KW-0677">Repeat</keyword>
<keyword id="KW-0690">Ribosome biogenesis</keyword>
<keyword id="KW-0698">rRNA processing</keyword>
<keyword id="KW-0853">WD repeat</keyword>
<dbReference type="EMBL" id="HE601438">
    <property type="protein sequence ID" value="CAP23558.1"/>
    <property type="molecule type" value="Genomic_DNA"/>
</dbReference>
<dbReference type="SMR" id="A8WSU9"/>
<dbReference type="FunCoup" id="A8WSU9">
    <property type="interactions" value="2161"/>
</dbReference>
<dbReference type="STRING" id="6238.A8WSU9"/>
<dbReference type="EnsemblMetazoa" id="CBG03075.1">
    <property type="protein sequence ID" value="CBG03075.1"/>
    <property type="gene ID" value="WBGene00026011"/>
</dbReference>
<dbReference type="KEGG" id="cbr:CBG_03075"/>
<dbReference type="CTD" id="8572782"/>
<dbReference type="WormBase" id="CBG03075">
    <property type="protein sequence ID" value="CBP14498"/>
    <property type="gene ID" value="WBGene00026011"/>
    <property type="gene designation" value="Cbr-pro-1"/>
</dbReference>
<dbReference type="eggNOG" id="KOG0646">
    <property type="taxonomic scope" value="Eukaryota"/>
</dbReference>
<dbReference type="HOGENOM" id="CLU_038304_0_0_1"/>
<dbReference type="InParanoid" id="A8WSU9"/>
<dbReference type="OMA" id="KYCIWEI"/>
<dbReference type="Proteomes" id="UP000008549">
    <property type="component" value="Unassembled WGS sequence"/>
</dbReference>
<dbReference type="GO" id="GO:0005656">
    <property type="term" value="C:nuclear pre-replicative complex"/>
    <property type="evidence" value="ECO:0000318"/>
    <property type="project" value="GO_Central"/>
</dbReference>
<dbReference type="GO" id="GO:0005730">
    <property type="term" value="C:nucleolus"/>
    <property type="evidence" value="ECO:0007669"/>
    <property type="project" value="UniProtKB-SubCell"/>
</dbReference>
<dbReference type="GO" id="GO:0120330">
    <property type="term" value="C:rixosome complex"/>
    <property type="evidence" value="ECO:0000318"/>
    <property type="project" value="GO_Central"/>
</dbReference>
<dbReference type="GO" id="GO:0006261">
    <property type="term" value="P:DNA-templated DNA replication"/>
    <property type="evidence" value="ECO:0000318"/>
    <property type="project" value="GO_Central"/>
</dbReference>
<dbReference type="GO" id="GO:0007281">
    <property type="term" value="P:germ cell development"/>
    <property type="evidence" value="ECO:0007669"/>
    <property type="project" value="EnsemblMetazoa"/>
</dbReference>
<dbReference type="GO" id="GO:0007506">
    <property type="term" value="P:gonadal mesoderm development"/>
    <property type="evidence" value="ECO:0007669"/>
    <property type="project" value="UniProtKB-KW"/>
</dbReference>
<dbReference type="GO" id="GO:0006364">
    <property type="term" value="P:rRNA processing"/>
    <property type="evidence" value="ECO:0000318"/>
    <property type="project" value="GO_Central"/>
</dbReference>
<dbReference type="FunFam" id="2.130.10.10:FF:002335">
    <property type="entry name" value="Pre-rRNA-processing protein pro-1"/>
    <property type="match status" value="1"/>
</dbReference>
<dbReference type="Gene3D" id="2.130.10.10">
    <property type="entry name" value="YVTN repeat-like/Quinoprotein amine dehydrogenase"/>
    <property type="match status" value="2"/>
</dbReference>
<dbReference type="InterPro" id="IPR015943">
    <property type="entry name" value="WD40/YVTN_repeat-like_dom_sf"/>
</dbReference>
<dbReference type="InterPro" id="IPR036322">
    <property type="entry name" value="WD40_repeat_dom_sf"/>
</dbReference>
<dbReference type="InterPro" id="IPR001680">
    <property type="entry name" value="WD40_rpt"/>
</dbReference>
<dbReference type="InterPro" id="IPR045227">
    <property type="entry name" value="WDR18/Ipi3/RID3"/>
</dbReference>
<dbReference type="PANTHER" id="PTHR18763:SF0">
    <property type="entry name" value="WD REPEAT-CONTAINING PROTEIN 18"/>
    <property type="match status" value="1"/>
</dbReference>
<dbReference type="PANTHER" id="PTHR18763">
    <property type="entry name" value="WD-REPEAT PROTEIN 18"/>
    <property type="match status" value="1"/>
</dbReference>
<dbReference type="Pfam" id="PF00400">
    <property type="entry name" value="WD40"/>
    <property type="match status" value="2"/>
</dbReference>
<dbReference type="SMART" id="SM00320">
    <property type="entry name" value="WD40"/>
    <property type="match status" value="3"/>
</dbReference>
<dbReference type="SUPFAM" id="SSF50978">
    <property type="entry name" value="WD40 repeat-like"/>
    <property type="match status" value="1"/>
</dbReference>
<dbReference type="PROSITE" id="PS50082">
    <property type="entry name" value="WD_REPEATS_2"/>
    <property type="match status" value="1"/>
</dbReference>
<dbReference type="PROSITE" id="PS50294">
    <property type="entry name" value="WD_REPEATS_REGION"/>
    <property type="match status" value="1"/>
</dbReference>